<sequence length="72" mass="8437">MKNSESIKEFKKLNSSQITEKIDQLRKDLFDLRFKQATRQLNETHKFKIIKKQVAQLLTLSKSQSTSQKPAD</sequence>
<keyword id="KW-0687">Ribonucleoprotein</keyword>
<keyword id="KW-0689">Ribosomal protein</keyword>
<accession>Q7UZV4</accession>
<proteinExistence type="inferred from homology"/>
<dbReference type="EMBL" id="BX548174">
    <property type="protein sequence ID" value="CAE20009.1"/>
    <property type="molecule type" value="Genomic_DNA"/>
</dbReference>
<dbReference type="RefSeq" id="WP_011133178.1">
    <property type="nucleotide sequence ID" value="NC_005072.1"/>
</dbReference>
<dbReference type="SMR" id="Q7UZV4"/>
<dbReference type="STRING" id="59919.PMM1550"/>
<dbReference type="KEGG" id="pmm:PMM1550"/>
<dbReference type="eggNOG" id="COG0255">
    <property type="taxonomic scope" value="Bacteria"/>
</dbReference>
<dbReference type="HOGENOM" id="CLU_158491_0_1_3"/>
<dbReference type="OrthoDB" id="9815192at2"/>
<dbReference type="Proteomes" id="UP000001026">
    <property type="component" value="Chromosome"/>
</dbReference>
<dbReference type="GO" id="GO:0022625">
    <property type="term" value="C:cytosolic large ribosomal subunit"/>
    <property type="evidence" value="ECO:0007669"/>
    <property type="project" value="TreeGrafter"/>
</dbReference>
<dbReference type="GO" id="GO:0003735">
    <property type="term" value="F:structural constituent of ribosome"/>
    <property type="evidence" value="ECO:0007669"/>
    <property type="project" value="InterPro"/>
</dbReference>
<dbReference type="GO" id="GO:0006412">
    <property type="term" value="P:translation"/>
    <property type="evidence" value="ECO:0007669"/>
    <property type="project" value="UniProtKB-UniRule"/>
</dbReference>
<dbReference type="Gene3D" id="1.10.287.310">
    <property type="match status" value="1"/>
</dbReference>
<dbReference type="HAMAP" id="MF_00374">
    <property type="entry name" value="Ribosomal_uL29"/>
    <property type="match status" value="1"/>
</dbReference>
<dbReference type="InterPro" id="IPR050063">
    <property type="entry name" value="Ribosomal_protein_uL29"/>
</dbReference>
<dbReference type="InterPro" id="IPR001854">
    <property type="entry name" value="Ribosomal_uL29"/>
</dbReference>
<dbReference type="InterPro" id="IPR036049">
    <property type="entry name" value="Ribosomal_uL29_sf"/>
</dbReference>
<dbReference type="NCBIfam" id="TIGR00012">
    <property type="entry name" value="L29"/>
    <property type="match status" value="1"/>
</dbReference>
<dbReference type="PANTHER" id="PTHR10916">
    <property type="entry name" value="60S RIBOSOMAL PROTEIN L35/50S RIBOSOMAL PROTEIN L29"/>
    <property type="match status" value="1"/>
</dbReference>
<dbReference type="PANTHER" id="PTHR10916:SF0">
    <property type="entry name" value="LARGE RIBOSOMAL SUBUNIT PROTEIN UL29C"/>
    <property type="match status" value="1"/>
</dbReference>
<dbReference type="Pfam" id="PF00831">
    <property type="entry name" value="Ribosomal_L29"/>
    <property type="match status" value="1"/>
</dbReference>
<dbReference type="SUPFAM" id="SSF46561">
    <property type="entry name" value="Ribosomal protein L29 (L29p)"/>
    <property type="match status" value="1"/>
</dbReference>
<organism>
    <name type="scientific">Prochlorococcus marinus subsp. pastoris (strain CCMP1986 / NIES-2087 / MED4)</name>
    <dbReference type="NCBI Taxonomy" id="59919"/>
    <lineage>
        <taxon>Bacteria</taxon>
        <taxon>Bacillati</taxon>
        <taxon>Cyanobacteriota</taxon>
        <taxon>Cyanophyceae</taxon>
        <taxon>Synechococcales</taxon>
        <taxon>Prochlorococcaceae</taxon>
        <taxon>Prochlorococcus</taxon>
    </lineage>
</organism>
<reference key="1">
    <citation type="journal article" date="2003" name="Nature">
        <title>Genome divergence in two Prochlorococcus ecotypes reflects oceanic niche differentiation.</title>
        <authorList>
            <person name="Rocap G."/>
            <person name="Larimer F.W."/>
            <person name="Lamerdin J.E."/>
            <person name="Malfatti S."/>
            <person name="Chain P."/>
            <person name="Ahlgren N.A."/>
            <person name="Arellano A."/>
            <person name="Coleman M."/>
            <person name="Hauser L."/>
            <person name="Hess W.R."/>
            <person name="Johnson Z.I."/>
            <person name="Land M.L."/>
            <person name="Lindell D."/>
            <person name="Post A.F."/>
            <person name="Regala W."/>
            <person name="Shah M."/>
            <person name="Shaw S.L."/>
            <person name="Steglich C."/>
            <person name="Sullivan M.B."/>
            <person name="Ting C.S."/>
            <person name="Tolonen A."/>
            <person name="Webb E.A."/>
            <person name="Zinser E.R."/>
            <person name="Chisholm S.W."/>
        </authorList>
    </citation>
    <scope>NUCLEOTIDE SEQUENCE [LARGE SCALE GENOMIC DNA]</scope>
    <source>
        <strain>CCMP1986 / NIES-2087 / MED4</strain>
    </source>
</reference>
<gene>
    <name evidence="1" type="primary">rpmC</name>
    <name evidence="1" type="synonym">rpl29</name>
    <name type="ordered locus">PMM1550</name>
</gene>
<protein>
    <recommendedName>
        <fullName evidence="1">Large ribosomal subunit protein uL29</fullName>
    </recommendedName>
    <alternativeName>
        <fullName evidence="2">50S ribosomal protein L29</fullName>
    </alternativeName>
</protein>
<name>RL29_PROMP</name>
<evidence type="ECO:0000255" key="1">
    <source>
        <dbReference type="HAMAP-Rule" id="MF_00374"/>
    </source>
</evidence>
<evidence type="ECO:0000305" key="2"/>
<feature type="chain" id="PRO_0000130436" description="Large ribosomal subunit protein uL29">
    <location>
        <begin position="1"/>
        <end position="72"/>
    </location>
</feature>
<comment type="similarity">
    <text evidence="1">Belongs to the universal ribosomal protein uL29 family.</text>
</comment>